<feature type="chain" id="PRO_0000099548" description="Protein OPG107">
    <location>
        <begin position="1"/>
        <end position="189"/>
    </location>
</feature>
<feature type="topological domain" description="Intravirion" evidence="2">
    <location>
        <begin position="1"/>
        <end position="28"/>
    </location>
</feature>
<feature type="transmembrane region" description="Helical; Signal-anchor for type III membrane protein" evidence="2">
    <location>
        <begin position="29"/>
        <end position="49"/>
    </location>
</feature>
<feature type="topological domain" description="Virion surface" evidence="2">
    <location>
        <begin position="50"/>
        <end position="189"/>
    </location>
</feature>
<feature type="mutagenesis site" description="Complete loss of interaction with OPG155." evidence="5">
    <original>L</original>
    <variation>E</variation>
    <location>
        <position position="170"/>
    </location>
</feature>
<feature type="mutagenesis site" description="Complete loss of interaction with OPG155." evidence="5">
    <original>G</original>
    <variation>E</variation>
    <location>
        <position position="171"/>
    </location>
</feature>
<feature type="mutagenesis site" description="Complete loss of interaction with OPG155." evidence="5">
    <original>G</original>
    <variation>E</variation>
    <location>
        <position position="174"/>
    </location>
</feature>
<feature type="sequence conflict" description="In Ref. 1." evidence="6" ref="1">
    <original>D</original>
    <variation>V</variation>
    <location>
        <position position="77"/>
    </location>
</feature>
<feature type="sequence conflict" description="In Ref. 1; AAB59837." evidence="6" ref="1">
    <original>P</original>
    <variation>A</variation>
    <location>
        <position position="121"/>
    </location>
</feature>
<feature type="strand" evidence="7">
    <location>
        <begin position="101"/>
        <end position="104"/>
    </location>
</feature>
<feature type="strand" evidence="7">
    <location>
        <begin position="106"/>
        <end position="114"/>
    </location>
</feature>
<feature type="turn" evidence="7">
    <location>
        <begin position="116"/>
        <end position="118"/>
    </location>
</feature>
<feature type="strand" evidence="7">
    <location>
        <begin position="121"/>
        <end position="125"/>
    </location>
</feature>
<feature type="strand" evidence="7">
    <location>
        <begin position="129"/>
        <end position="131"/>
    </location>
</feature>
<feature type="strand" evidence="7">
    <location>
        <begin position="137"/>
        <end position="140"/>
    </location>
</feature>
<feature type="helix" evidence="7">
    <location>
        <begin position="142"/>
        <end position="155"/>
    </location>
</feature>
<feature type="strand" evidence="7">
    <location>
        <begin position="158"/>
        <end position="161"/>
    </location>
</feature>
<feature type="helix" evidence="7">
    <location>
        <begin position="164"/>
        <end position="170"/>
    </location>
</feature>
<feature type="helix" evidence="7">
    <location>
        <begin position="181"/>
        <end position="184"/>
    </location>
</feature>
<gene>
    <name type="primary">OPG107</name>
    <name type="ordered locus">VACWR100</name>
    <name type="ORF">H2R</name>
</gene>
<name>PG107_VACCW</name>
<dbReference type="EMBL" id="M13209">
    <property type="protein sequence ID" value="AAB59837.1"/>
    <property type="molecule type" value="Genomic_DNA"/>
</dbReference>
<dbReference type="EMBL" id="AY243312">
    <property type="protein sequence ID" value="AAO89379.1"/>
    <property type="molecule type" value="Genomic_DNA"/>
</dbReference>
<dbReference type="PIR" id="B24481">
    <property type="entry name" value="QQVZH2"/>
</dbReference>
<dbReference type="RefSeq" id="YP_232982.1">
    <property type="nucleotide sequence ID" value="NC_006998.1"/>
</dbReference>
<dbReference type="PDB" id="8INI">
    <property type="method" value="X-ray"/>
    <property type="resolution" value="1.75 A"/>
    <property type="chains" value="A/B=91-189"/>
</dbReference>
<dbReference type="PDBsum" id="8INI"/>
<dbReference type="SMR" id="P08583"/>
<dbReference type="IntAct" id="P08583">
    <property type="interactions" value="1"/>
</dbReference>
<dbReference type="MINT" id="P08583"/>
<dbReference type="TCDB" id="1.G.11.1.1">
    <property type="family name" value="the poxvirus cell entry protein complex (pep-c) family"/>
</dbReference>
<dbReference type="DNASU" id="3707556"/>
<dbReference type="GeneID" id="3707556"/>
<dbReference type="KEGG" id="vg:3707556"/>
<dbReference type="Proteomes" id="UP000000344">
    <property type="component" value="Genome"/>
</dbReference>
<dbReference type="GO" id="GO:0044167">
    <property type="term" value="C:host cell endoplasmic reticulum membrane"/>
    <property type="evidence" value="ECO:0007669"/>
    <property type="project" value="UniProtKB-SubCell"/>
</dbReference>
<dbReference type="GO" id="GO:0016020">
    <property type="term" value="C:membrane"/>
    <property type="evidence" value="ECO:0007669"/>
    <property type="project" value="UniProtKB-KW"/>
</dbReference>
<dbReference type="GO" id="GO:0019031">
    <property type="term" value="C:viral envelope"/>
    <property type="evidence" value="ECO:0007669"/>
    <property type="project" value="UniProtKB-KW"/>
</dbReference>
<dbReference type="GO" id="GO:0055036">
    <property type="term" value="C:virion membrane"/>
    <property type="evidence" value="ECO:0007669"/>
    <property type="project" value="UniProtKB-SubCell"/>
</dbReference>
<dbReference type="GO" id="GO:0019064">
    <property type="term" value="P:fusion of virus membrane with host plasma membrane"/>
    <property type="evidence" value="ECO:0007669"/>
    <property type="project" value="UniProtKB-KW"/>
</dbReference>
<dbReference type="GO" id="GO:0046718">
    <property type="term" value="P:symbiont entry into host cell"/>
    <property type="evidence" value="ECO:0007669"/>
    <property type="project" value="UniProtKB-KW"/>
</dbReference>
<dbReference type="InterPro" id="IPR005023">
    <property type="entry name" value="Pox_LP_H2"/>
</dbReference>
<dbReference type="Pfam" id="PF03356">
    <property type="entry name" value="Pox_LP_H2"/>
    <property type="match status" value="1"/>
</dbReference>
<reference key="1">
    <citation type="journal article" date="1986" name="J. Virol.">
        <title>Conserved TAAATG sequence at the transcriptional and translational initiation sites of vaccinia virus late genes deduced by structural and functional analysis of the HindIII H genome fragment.</title>
        <authorList>
            <person name="Rosel J.L."/>
            <person name="Earl P.L."/>
            <person name="Weir J.P."/>
            <person name="Moss B."/>
        </authorList>
    </citation>
    <scope>NUCLEOTIDE SEQUENCE [GENOMIC DNA]</scope>
</reference>
<reference key="2">
    <citation type="submission" date="2003-02" db="EMBL/GenBank/DDBJ databases">
        <title>Sequencing of the coding region of Vaccinia-WR to an average 9-fold redundancy and an error rate of 0.16/10kb.</title>
        <authorList>
            <person name="Esposito J.J."/>
            <person name="Frace A.M."/>
            <person name="Sammons S.A."/>
            <person name="Olsen-Rasmussen M."/>
            <person name="Osborne J."/>
            <person name="Wohlhueter R."/>
        </authorList>
    </citation>
    <scope>NUCLEOTIDE SEQUENCE [LARGE SCALE GENOMIC DNA]</scope>
</reference>
<reference key="3">
    <citation type="journal article" date="1986" name="Proc. Natl. Acad. Sci. U.S.A.">
        <title>Homology between RNA polymerases of poxviruses, prokaryotes, and eukaryotes: nucleotide sequence and transcriptional analysis of vaccinia virus genes encoding 147-kDa and 22-kDa subunits.</title>
        <authorList>
            <person name="Broyles S.S."/>
            <person name="Moss B."/>
        </authorList>
    </citation>
    <scope>NUCLEOTIDE SEQUENCE [GENOMIC DNA] OF 1-100</scope>
</reference>
<reference key="4">
    <citation type="journal article" date="2005" name="J. Virol.">
        <title>Vaccinia virus H2 protein is an essential component of a complex involved in virus entry and cell-cell fusion.</title>
        <authorList>
            <person name="Senkevich T.G."/>
            <person name="Moss B."/>
        </authorList>
    </citation>
    <scope>FUNCTION</scope>
</reference>
<reference key="5">
    <citation type="journal article" date="2005" name="Proc. Natl. Acad. Sci. U.S.A.">
        <title>Poxvirus multiprotein entry-fusion complex.</title>
        <authorList>
            <person name="Senkevich T.G."/>
            <person name="Ojeda S."/>
            <person name="Townsley A."/>
            <person name="Nelson G.E."/>
            <person name="Moss B."/>
        </authorList>
    </citation>
    <scope>IDENTIFICATION IN A COMPLEX WITH OPG143</scope>
    <scope>OPG147</scope>
    <scope>OPG155</scope>
    <scope>OPG86</scope>
    <scope>OPG94</scope>
    <scope>OPG104</scope>
    <scope>OPG099</scope>
</reference>
<reference key="6">
    <citation type="journal article" date="2008" name="J. Virol.">
        <title>A conserved sequence within the H2 subunit of the vaccinia virus entry/fusion complex is important for interaction with the A28 subunit and infectivity.</title>
        <authorList>
            <person name="Nelson G.E."/>
            <person name="Wagenaar T.R."/>
            <person name="Moss B."/>
        </authorList>
    </citation>
    <scope>FUNCTION</scope>
    <scope>SUBCELLULAR LOCATION</scope>
    <scope>INTERACTION WITH OPG155</scope>
    <scope>MUTAGENESIS OF LEU-170; GLY-171 AND GLY-174</scope>
</reference>
<sequence length="189" mass="21543">MDKTTLSVNACNLEYVREKAIVGVQAAKTSTLIFFVIILAISALLLWFQTSDNPVFNELTRYMRIKNTVNDWKSLTDSKTKLESDRGRLLAAGKDDIFEFKCVDFGAYFIAMRLDKKTYLPQAIRRGTGDAWMVKKAAKVDPSAQQFCQYLIKHKSNNVITCGNEMLNELGYSGYFMSPHWCSDFSNME</sequence>
<organismHost>
    <name type="scientific">Bos taurus</name>
    <name type="common">Bovine</name>
    <dbReference type="NCBI Taxonomy" id="9913"/>
</organismHost>
<evidence type="ECO:0000250" key="1"/>
<evidence type="ECO:0000255" key="2"/>
<evidence type="ECO:0000269" key="3">
    <source>
    </source>
</evidence>
<evidence type="ECO:0000269" key="4">
    <source>
    </source>
</evidence>
<evidence type="ECO:0000269" key="5">
    <source>
    </source>
</evidence>
<evidence type="ECO:0000305" key="6"/>
<evidence type="ECO:0007829" key="7">
    <source>
        <dbReference type="PDB" id="8INI"/>
    </source>
</evidence>
<keyword id="KW-0002">3D-structure</keyword>
<keyword id="KW-1015">Disulfide bond</keyword>
<keyword id="KW-1169">Fusion of virus membrane with host cell membrane</keyword>
<keyword id="KW-1168">Fusion of virus membrane with host membrane</keyword>
<keyword id="KW-1038">Host endoplasmic reticulum</keyword>
<keyword id="KW-1043">Host membrane</keyword>
<keyword id="KW-0426">Late protein</keyword>
<keyword id="KW-0472">Membrane</keyword>
<keyword id="KW-1185">Reference proteome</keyword>
<keyword id="KW-0735">Signal-anchor</keyword>
<keyword id="KW-0812">Transmembrane</keyword>
<keyword id="KW-1133">Transmembrane helix</keyword>
<keyword id="KW-0261">Viral envelope protein</keyword>
<keyword id="KW-1162">Viral penetration into host cytoplasm</keyword>
<keyword id="KW-0946">Virion</keyword>
<keyword id="KW-1160">Virus entry into host cell</keyword>
<organism>
    <name type="scientific">Vaccinia virus (strain Western Reserve)</name>
    <name type="common">VACV</name>
    <name type="synonym">Vaccinia virus (strain WR)</name>
    <dbReference type="NCBI Taxonomy" id="10254"/>
    <lineage>
        <taxon>Viruses</taxon>
        <taxon>Varidnaviria</taxon>
        <taxon>Bamfordvirae</taxon>
        <taxon>Nucleocytoviricota</taxon>
        <taxon>Pokkesviricetes</taxon>
        <taxon>Chitovirales</taxon>
        <taxon>Poxviridae</taxon>
        <taxon>Chordopoxvirinae</taxon>
        <taxon>Orthopoxvirus</taxon>
        <taxon>Vaccinia virus</taxon>
    </lineage>
</organism>
<accession>P08583</accession>
<protein>
    <recommendedName>
        <fullName>Protein OPG107</fullName>
    </recommendedName>
</protein>
<comment type="function">
    <text evidence="3 4 5">Envelope protein part of the entry-fusion complex responsible for the virus membrane fusion with host cell membrane during virus entry. Also plays a role in cell-cell fusion (syncytium formation).</text>
</comment>
<comment type="subunit">
    <text evidence="4 5">Part of a stable entry-fusion complex (EFC) which is at least composed of proteins OPG143, OPG147, OPG155, OPG86, OPG94, OPG107, OPG104, and OPG099. Formation of the viral membrane is necessary for the assembly of the complex.</text>
</comment>
<comment type="interaction">
    <interactant intactId="EBI-7564589">
        <id>P08583</id>
    </interactant>
    <interactant intactId="EBI-6969231">
        <id>P68633</id>
        <label>OPG155</label>
    </interactant>
    <organismsDiffer>false</organismsDiffer>
    <experiments>3</experiments>
</comment>
<comment type="subcellular location">
    <subcellularLocation>
        <location evidence="6">Virion membrane</location>
        <topology evidence="6">Single-pass type III membrane protein</topology>
    </subcellularLocation>
    <subcellularLocation>
        <location evidence="5">Host endoplasmic reticulum membrane</location>
    </subcellularLocation>
    <text evidence="1">Component of the mature virion (MV) membrane (By similarity). The mature virion is located in the cytoplasm of infected cells and is probably released by cell lysis.</text>
</comment>
<comment type="PTM">
    <text evidence="6">Contains two intramolecular disulfide bonds. They are created by the viral disulfide bond formation pathway, a poxvirus-specific pathway that operates on the cytoplasmic side of the MV membranes (Probable).</text>
</comment>
<comment type="similarity">
    <text evidence="6">Belongs to the orthopoxvirus OPG107 family.</text>
</comment>
<proteinExistence type="evidence at protein level"/>